<sequence>MVIMEGFKIAMKVIDEIDKKIKPLIGWEKADEVVKIGADGTPTKRIDVIAENMAINILEKFSGGILISEEIGLKVVGDELEYIFILDPIDGTYNALKSIPIYSTSIAVAKIKGEDKKLIRENINNIDWIKSFIANKYTINDLYVGIVKNLATGDLYYAIKGEGSFLEKDGEKIKIETKNIKDLKEASVGLFVYGLSNDLLEFLKERKVRRVRLFGSMALEMCYVVSGALDAYINVNENSRLCDIAGAYVICREGNAIVTNKNGKPLNMKLHLMERTSLIVSNKYLHKKLIALFGNRWIIKPVKFGIVVREDKEEAINLAIEICKYLKDKNIPFCVEDFLRERVGGDKFDISAISHIIAIGGDGTILRASRLVNGETIPIIAVNMGKVGFLAEFCKDEVFEIIDKVIYGEYEIEKRSKLSCKIIKDNRVIKTPSALNEMVVITKNPAKILEFDVYVNDTLVENVRADGIIVSTPTGSTAYSLSAGGPIVEPNVDCFIISPICPFKLSSRPLVISASNRIKLKLKLEKPALLVIDGSVEYEINKDDELIFEKSDSYAYFVKGQSFYNKLSRCLGIK</sequence>
<comment type="function">
    <text evidence="3">Involved in the regulation of the intracellular balance between NAD(H) and NADP(H), and is a key enzyme in the biosynthesis of NADP. Catalyzes the phosphorylation and dephosphorylation of NAD and NADP, respectively. Although it shows conflicting dual activities and is able to supply NADP, it seems that its physiological role is to prevent excess accumulation of NADP. Kinase can use ATP and other nucleoside triphosphates (UTP, TTP, CTP, GTP) as well as inorganic polyphosphate (poly(P)) as phosphoryl donors, however poly(P) is not considered to be the physiological phosphoryl donor. NAD is the preferred substrate for the kinase, but NADH can also be used as phosphoryl acceptor. Phosphatase can use NADP or NADPH as phosphoryl donor, but NADP is the preferred substrate. Phosphatase also has an activity toward the terminal phosphate group at C-2 of adenosine in 2'-AMP and toward the phosphate group at C-1 of fructose 1,6-bisphosphate, but not toward inositol 1-phosphate.</text>
</comment>
<comment type="catalytic activity">
    <reaction evidence="2 3">
        <text>NAD(+) + ATP = ADP + NADP(+) + H(+)</text>
        <dbReference type="Rhea" id="RHEA:18629"/>
        <dbReference type="ChEBI" id="CHEBI:15378"/>
        <dbReference type="ChEBI" id="CHEBI:30616"/>
        <dbReference type="ChEBI" id="CHEBI:57540"/>
        <dbReference type="ChEBI" id="CHEBI:58349"/>
        <dbReference type="ChEBI" id="CHEBI:456216"/>
        <dbReference type="EC" id="2.7.1.23"/>
    </reaction>
    <physiologicalReaction direction="left-to-right" evidence="3">
        <dbReference type="Rhea" id="RHEA:18630"/>
    </physiologicalReaction>
</comment>
<comment type="catalytic activity">
    <reaction evidence="3">
        <text>NADP(+) + H2O = phosphate + NAD(+)</text>
        <dbReference type="Rhea" id="RHEA:28050"/>
        <dbReference type="ChEBI" id="CHEBI:15377"/>
        <dbReference type="ChEBI" id="CHEBI:43474"/>
        <dbReference type="ChEBI" id="CHEBI:57540"/>
        <dbReference type="ChEBI" id="CHEBI:58349"/>
    </reaction>
    <physiologicalReaction direction="left-to-right" evidence="3">
        <dbReference type="Rhea" id="RHEA:28051"/>
    </physiologicalReaction>
</comment>
<comment type="catalytic activity">
    <reaction evidence="3">
        <text>UTP + NAD(+) = UDP + NADP(+) + H(+)</text>
        <dbReference type="Rhea" id="RHEA:75163"/>
        <dbReference type="ChEBI" id="CHEBI:15378"/>
        <dbReference type="ChEBI" id="CHEBI:46398"/>
        <dbReference type="ChEBI" id="CHEBI:57540"/>
        <dbReference type="ChEBI" id="CHEBI:58223"/>
        <dbReference type="ChEBI" id="CHEBI:58349"/>
    </reaction>
    <physiologicalReaction direction="left-to-right" evidence="3">
        <dbReference type="Rhea" id="RHEA:75164"/>
    </physiologicalReaction>
</comment>
<comment type="catalytic activity">
    <reaction evidence="3">
        <text>5-methyl-UTP + NAD(+) = 5-methyl-UDP + NADP(+) + H(+)</text>
        <dbReference type="Rhea" id="RHEA:75159"/>
        <dbReference type="ChEBI" id="CHEBI:15378"/>
        <dbReference type="ChEBI" id="CHEBI:57540"/>
        <dbReference type="ChEBI" id="CHEBI:58349"/>
        <dbReference type="ChEBI" id="CHEBI:61417"/>
        <dbReference type="ChEBI" id="CHEBI:63527"/>
    </reaction>
    <physiologicalReaction direction="left-to-right" evidence="3">
        <dbReference type="Rhea" id="RHEA:75160"/>
    </physiologicalReaction>
</comment>
<comment type="catalytic activity">
    <reaction evidence="3">
        <text>CTP + NAD(+) = CDP + NADP(+) + H(+)</text>
        <dbReference type="Rhea" id="RHEA:75167"/>
        <dbReference type="ChEBI" id="CHEBI:15378"/>
        <dbReference type="ChEBI" id="CHEBI:37563"/>
        <dbReference type="ChEBI" id="CHEBI:57540"/>
        <dbReference type="ChEBI" id="CHEBI:58069"/>
        <dbReference type="ChEBI" id="CHEBI:58349"/>
    </reaction>
    <physiologicalReaction direction="left-to-right" evidence="3">
        <dbReference type="Rhea" id="RHEA:75168"/>
    </physiologicalReaction>
</comment>
<comment type="catalytic activity">
    <reaction evidence="3">
        <text>GTP + NAD(+) = GDP + NADP(+) + H(+)</text>
        <dbReference type="Rhea" id="RHEA:75171"/>
        <dbReference type="ChEBI" id="CHEBI:15378"/>
        <dbReference type="ChEBI" id="CHEBI:37565"/>
        <dbReference type="ChEBI" id="CHEBI:57540"/>
        <dbReference type="ChEBI" id="CHEBI:58189"/>
        <dbReference type="ChEBI" id="CHEBI:58349"/>
    </reaction>
    <physiologicalReaction direction="left-to-right" evidence="3">
        <dbReference type="Rhea" id="RHEA:75172"/>
    </physiologicalReaction>
</comment>
<comment type="catalytic activity">
    <reaction evidence="3">
        <text>dATP + NAD(+) = dADP + NADP(+) + H(+)</text>
        <dbReference type="Rhea" id="RHEA:75175"/>
        <dbReference type="ChEBI" id="CHEBI:15378"/>
        <dbReference type="ChEBI" id="CHEBI:57540"/>
        <dbReference type="ChEBI" id="CHEBI:57667"/>
        <dbReference type="ChEBI" id="CHEBI:58349"/>
        <dbReference type="ChEBI" id="CHEBI:61404"/>
    </reaction>
    <physiologicalReaction direction="left-to-right" evidence="3">
        <dbReference type="Rhea" id="RHEA:75176"/>
    </physiologicalReaction>
</comment>
<comment type="catalytic activity">
    <reaction evidence="3">
        <text>NADPH + H2O = phosphate + NADH</text>
        <dbReference type="Rhea" id="RHEA:60664"/>
        <dbReference type="ChEBI" id="CHEBI:15377"/>
        <dbReference type="ChEBI" id="CHEBI:43474"/>
        <dbReference type="ChEBI" id="CHEBI:57783"/>
        <dbReference type="ChEBI" id="CHEBI:57945"/>
    </reaction>
    <physiologicalReaction direction="left-to-right" evidence="3">
        <dbReference type="Rhea" id="RHEA:60665"/>
    </physiologicalReaction>
</comment>
<comment type="catalytic activity">
    <reaction evidence="3">
        <text>adenosine 2'-phosphate + H2O = adenosine + phosphate</text>
        <dbReference type="Rhea" id="RHEA:37343"/>
        <dbReference type="ChEBI" id="CHEBI:15377"/>
        <dbReference type="ChEBI" id="CHEBI:16335"/>
        <dbReference type="ChEBI" id="CHEBI:43474"/>
        <dbReference type="ChEBI" id="CHEBI:77740"/>
    </reaction>
    <physiologicalReaction direction="left-to-right" evidence="3">
        <dbReference type="Rhea" id="RHEA:37344"/>
    </physiologicalReaction>
</comment>
<comment type="catalytic activity">
    <reaction evidence="3">
        <text>beta-D-fructose 1,6-bisphosphate + H2O = beta-D-fructose 6-phosphate + phosphate</text>
        <dbReference type="Rhea" id="RHEA:11064"/>
        <dbReference type="ChEBI" id="CHEBI:15377"/>
        <dbReference type="ChEBI" id="CHEBI:32966"/>
        <dbReference type="ChEBI" id="CHEBI:43474"/>
        <dbReference type="ChEBI" id="CHEBI:57634"/>
    </reaction>
    <physiologicalReaction direction="left-to-right" evidence="3">
        <dbReference type="Rhea" id="RHEA:11065"/>
    </physiologicalReaction>
</comment>
<comment type="cofactor">
    <cofactor evidence="3">
        <name>Mg(2+)</name>
        <dbReference type="ChEBI" id="CHEBI:18420"/>
    </cofactor>
    <text evidence="3">NAD kinase and pNPPase show maximum activities at 50 and 20 mM magnesium, respectively.</text>
</comment>
<comment type="activity regulation">
    <text evidence="3">Phosphatase activity is slightly inhibited by ADP, NADH and ATP, and moderately inhibited by NAD and 5'-AMP (PubMed:16192277). Kinase activity is slightly inhibited by ADP and NADP (PubMed:16192277).</text>
</comment>
<comment type="biophysicochemical properties">
    <kinetics>
        <KM evidence="3">0.35 mM for ATP (for kinase activity at pH 8.5 and at 85 degrees Celsius)</KM>
        <KM evidence="3">3 mM for NAD (for kinase activity at pH 8.5 and at 85 degrees Celsius)</KM>
        <Vmax evidence="3">93.4 umol/min/mg enzyme toward ATP (for kinase activity at pH 8.5 and at 85 degrees Celsius)</Vmax>
        <Vmax evidence="3">99.2 umol/min/mg enzyme toward NAD (for kinase activity at pH 8.5 and at 85 degrees Celsius)</Vmax>
        <Vmax evidence="3">212.0 umol/min/mg enzyme toward NADP (for phosphatase activity at pH 8.5 and at 85 degrees Celsius)</Vmax>
        <Vmax evidence="3">212.0 umol/min/mg enzyme toward fructose 1,6-bisphosphate (for phosphatase activity at pH 8.5 and at 85 degrees Celsius)</Vmax>
        <Vmax evidence="3">236.0 umol/min/mg enzyme toward NADPH (for phosphatase activity at pH 8.5 and at 85 degrees Celsius)</Vmax>
        <text evidence="3">kcat is 399 sec(-1) for kinase activity with ATP as substrate. kcat is 424 sec(-1) for kinase activity with NAD as substrate. kcat is 906 sec(-1) for phosphatase activity with fructose 1,6-bisphosphate and NADP as substrates. kcat is 1007 sec(-1) for phosphatase activity with NADPH as substrate.</text>
    </kinetics>
    <temperatureDependence>
        <text evidence="3">Optimum temperature is 100 degrees Celsius for phosphatase and kinase activities. Both are inactive below 60 degrees Celsius.</text>
    </temperatureDependence>
</comment>
<comment type="subunit">
    <text evidence="3">Homotetramer.</text>
</comment>
<comment type="subcellular location">
    <subcellularLocation>
        <location evidence="2">Cytoplasm</location>
    </subcellularLocation>
</comment>
<comment type="miscellaneous">
    <text evidence="6">The phosphatase is inert toward the substrates of NAD kinase (NAD, NADH, ATP, and poly(P)). This demonstrates that the phosphatase activity never interferes with the NAD kinase activity by degrading its substrates.</text>
</comment>
<comment type="similarity">
    <text evidence="5">In the N-terminal section; belongs to the inositol monophosphatase superfamily.</text>
</comment>
<comment type="similarity">
    <text evidence="5">In the C-terminal section; belongs to the NAD kinase family.</text>
</comment>
<proteinExistence type="evidence at protein level"/>
<name>NPPNK_METJA</name>
<dbReference type="EC" id="2.7.1.23" evidence="2 3"/>
<dbReference type="EC" id="3.1.3.-" evidence="3"/>
<dbReference type="EMBL" id="L77117">
    <property type="protein sequence ID" value="AAB98922.1"/>
    <property type="molecule type" value="Genomic_DNA"/>
</dbReference>
<dbReference type="PIR" id="E64414">
    <property type="entry name" value="E64414"/>
</dbReference>
<dbReference type="SMR" id="Q58327"/>
<dbReference type="FunCoup" id="Q58327">
    <property type="interactions" value="112"/>
</dbReference>
<dbReference type="STRING" id="243232.MJ_0917"/>
<dbReference type="PaxDb" id="243232-MJ_0917"/>
<dbReference type="EnsemblBacteria" id="AAB98922">
    <property type="protein sequence ID" value="AAB98922"/>
    <property type="gene ID" value="MJ_0917"/>
</dbReference>
<dbReference type="KEGG" id="mja:MJ_0917"/>
<dbReference type="eggNOG" id="arCOG01348">
    <property type="taxonomic scope" value="Archaea"/>
</dbReference>
<dbReference type="HOGENOM" id="CLU_445249_0_0_2"/>
<dbReference type="InParanoid" id="Q58327"/>
<dbReference type="PhylomeDB" id="Q58327"/>
<dbReference type="BioCyc" id="MetaCyc:MONOMER-21978"/>
<dbReference type="BRENDA" id="2.7.1.23">
    <property type="organism ID" value="3260"/>
</dbReference>
<dbReference type="BRENDA" id="3.1.3.108">
    <property type="organism ID" value="3260"/>
</dbReference>
<dbReference type="BRENDA" id="3.1.3.11">
    <property type="organism ID" value="3260"/>
</dbReference>
<dbReference type="SABIO-RK" id="Q58327"/>
<dbReference type="Proteomes" id="UP000000805">
    <property type="component" value="Chromosome"/>
</dbReference>
<dbReference type="GO" id="GO:0005737">
    <property type="term" value="C:cytoplasm"/>
    <property type="evidence" value="ECO:0007669"/>
    <property type="project" value="UniProtKB-SubCell"/>
</dbReference>
<dbReference type="GO" id="GO:0005524">
    <property type="term" value="F:ATP binding"/>
    <property type="evidence" value="ECO:0000314"/>
    <property type="project" value="UniProtKB"/>
</dbReference>
<dbReference type="GO" id="GO:0042132">
    <property type="term" value="F:fructose 1,6-bisphosphate 1-phosphatase activity"/>
    <property type="evidence" value="ECO:0007669"/>
    <property type="project" value="RHEA"/>
</dbReference>
<dbReference type="GO" id="GO:0046872">
    <property type="term" value="F:metal ion binding"/>
    <property type="evidence" value="ECO:0007669"/>
    <property type="project" value="UniProtKB-UniRule"/>
</dbReference>
<dbReference type="GO" id="GO:0051287">
    <property type="term" value="F:NAD binding"/>
    <property type="evidence" value="ECO:0000314"/>
    <property type="project" value="UniProtKB"/>
</dbReference>
<dbReference type="GO" id="GO:0003951">
    <property type="term" value="F:NAD+ kinase activity"/>
    <property type="evidence" value="ECO:0000314"/>
    <property type="project" value="UniProtKB"/>
</dbReference>
<dbReference type="GO" id="GO:0019178">
    <property type="term" value="F:NADP phosphatase activity"/>
    <property type="evidence" value="ECO:0000314"/>
    <property type="project" value="UniProtKB"/>
</dbReference>
<dbReference type="GO" id="GO:0102757">
    <property type="term" value="F:NADPH phosphatase activity"/>
    <property type="evidence" value="ECO:0007669"/>
    <property type="project" value="RHEA"/>
</dbReference>
<dbReference type="GO" id="GO:0006553">
    <property type="term" value="P:lysine metabolic process"/>
    <property type="evidence" value="ECO:0007669"/>
    <property type="project" value="InterPro"/>
</dbReference>
<dbReference type="GO" id="GO:0019674">
    <property type="term" value="P:NAD metabolic process"/>
    <property type="evidence" value="ECO:0007669"/>
    <property type="project" value="InterPro"/>
</dbReference>
<dbReference type="GO" id="GO:0006741">
    <property type="term" value="P:NADP biosynthetic process"/>
    <property type="evidence" value="ECO:0000314"/>
    <property type="project" value="UniProtKB"/>
</dbReference>
<dbReference type="CDD" id="cd01515">
    <property type="entry name" value="Arch_FBPase_1"/>
    <property type="match status" value="1"/>
</dbReference>
<dbReference type="FunFam" id="3.30.540.10:FF:000027">
    <property type="entry name" value="Fructose-1,6-bisphosphatase/inositol-1-monophosphatase"/>
    <property type="match status" value="1"/>
</dbReference>
<dbReference type="FunFam" id="3.40.190.80:FF:000020">
    <property type="entry name" value="Fructose-1,6-bisphosphatase/inositol-1-monophosphatase"/>
    <property type="match status" value="1"/>
</dbReference>
<dbReference type="FunFam" id="3.40.50.10330:FF:000053">
    <property type="entry name" value="NAD kinase 1"/>
    <property type="match status" value="1"/>
</dbReference>
<dbReference type="FunFam" id="2.60.200.30:FF:000009">
    <property type="entry name" value="Poly(P)/ATP NAD kinase"/>
    <property type="match status" value="1"/>
</dbReference>
<dbReference type="Gene3D" id="3.40.190.80">
    <property type="match status" value="1"/>
</dbReference>
<dbReference type="Gene3D" id="3.30.540.10">
    <property type="entry name" value="Fructose-1,6-Bisphosphatase, subunit A, domain 1"/>
    <property type="match status" value="1"/>
</dbReference>
<dbReference type="Gene3D" id="3.40.50.10330">
    <property type="entry name" value="Probable inorganic polyphosphate/atp-NAD kinase, domain 1"/>
    <property type="match status" value="1"/>
</dbReference>
<dbReference type="Gene3D" id="2.60.200.30">
    <property type="entry name" value="Probable inorganic polyphosphate/atp-NAD kinase, domain 2"/>
    <property type="match status" value="1"/>
</dbReference>
<dbReference type="HAMAP" id="MF_00361">
    <property type="entry name" value="NAD_kinase"/>
    <property type="match status" value="1"/>
</dbReference>
<dbReference type="InterPro" id="IPR017438">
    <property type="entry name" value="ATP-NAD_kinase_N"/>
</dbReference>
<dbReference type="InterPro" id="IPR017437">
    <property type="entry name" value="ATP-NAD_kinase_PpnK-typ_C"/>
</dbReference>
<dbReference type="InterPro" id="IPR021175">
    <property type="entry name" value="Bifunctional_PpnK_predicted"/>
</dbReference>
<dbReference type="InterPro" id="IPR020583">
    <property type="entry name" value="Inositol_monoP_metal-BS"/>
</dbReference>
<dbReference type="InterPro" id="IPR000760">
    <property type="entry name" value="Inositol_monophosphatase-like"/>
</dbReference>
<dbReference type="InterPro" id="IPR016064">
    <property type="entry name" value="NAD/diacylglycerol_kinase_sf"/>
</dbReference>
<dbReference type="InterPro" id="IPR002504">
    <property type="entry name" value="NADK"/>
</dbReference>
<dbReference type="NCBIfam" id="NF010678">
    <property type="entry name" value="PRK14076.1"/>
    <property type="match status" value="1"/>
</dbReference>
<dbReference type="PANTHER" id="PTHR20275:SF43">
    <property type="entry name" value="BIFUNCTIONAL NADP PHOSPHATASE_NAD KINASE"/>
    <property type="match status" value="1"/>
</dbReference>
<dbReference type="PANTHER" id="PTHR20275">
    <property type="entry name" value="NAD KINASE"/>
    <property type="match status" value="1"/>
</dbReference>
<dbReference type="Pfam" id="PF00459">
    <property type="entry name" value="Inositol_P"/>
    <property type="match status" value="2"/>
</dbReference>
<dbReference type="Pfam" id="PF01513">
    <property type="entry name" value="NAD_kinase"/>
    <property type="match status" value="1"/>
</dbReference>
<dbReference type="Pfam" id="PF20143">
    <property type="entry name" value="NAD_kinase_C"/>
    <property type="match status" value="1"/>
</dbReference>
<dbReference type="PIRSF" id="PIRSF036641">
    <property type="entry name" value="Bifunctional_PpnK_predicted"/>
    <property type="match status" value="1"/>
</dbReference>
<dbReference type="PRINTS" id="PR00377">
    <property type="entry name" value="IMPHPHTASES"/>
</dbReference>
<dbReference type="SUPFAM" id="SSF56655">
    <property type="entry name" value="Carbohydrate phosphatase"/>
    <property type="match status" value="1"/>
</dbReference>
<dbReference type="SUPFAM" id="SSF111331">
    <property type="entry name" value="NAD kinase/diacylglycerol kinase-like"/>
    <property type="match status" value="1"/>
</dbReference>
<dbReference type="PROSITE" id="PS00629">
    <property type="entry name" value="IMP_1"/>
    <property type="match status" value="1"/>
</dbReference>
<organism>
    <name type="scientific">Methanocaldococcus jannaschii (strain ATCC 43067 / DSM 2661 / JAL-1 / JCM 10045 / NBRC 100440)</name>
    <name type="common">Methanococcus jannaschii</name>
    <dbReference type="NCBI Taxonomy" id="243232"/>
    <lineage>
        <taxon>Archaea</taxon>
        <taxon>Methanobacteriati</taxon>
        <taxon>Methanobacteriota</taxon>
        <taxon>Methanomada group</taxon>
        <taxon>Methanococci</taxon>
        <taxon>Methanococcales</taxon>
        <taxon>Methanocaldococcaceae</taxon>
        <taxon>Methanocaldococcus</taxon>
    </lineage>
</organism>
<reference key="1">
    <citation type="journal article" date="1996" name="Science">
        <title>Complete genome sequence of the methanogenic archaeon, Methanococcus jannaschii.</title>
        <authorList>
            <person name="Bult C.J."/>
            <person name="White O."/>
            <person name="Olsen G.J."/>
            <person name="Zhou L."/>
            <person name="Fleischmann R.D."/>
            <person name="Sutton G.G."/>
            <person name="Blake J.A."/>
            <person name="FitzGerald L.M."/>
            <person name="Clayton R.A."/>
            <person name="Gocayne J.D."/>
            <person name="Kerlavage A.R."/>
            <person name="Dougherty B.A."/>
            <person name="Tomb J.-F."/>
            <person name="Adams M.D."/>
            <person name="Reich C.I."/>
            <person name="Overbeek R."/>
            <person name="Kirkness E.F."/>
            <person name="Weinstock K.G."/>
            <person name="Merrick J.M."/>
            <person name="Glodek A."/>
            <person name="Scott J.L."/>
            <person name="Geoghagen N.S.M."/>
            <person name="Weidman J.F."/>
            <person name="Fuhrmann J.L."/>
            <person name="Nguyen D."/>
            <person name="Utterback T.R."/>
            <person name="Kelley J.M."/>
            <person name="Peterson J.D."/>
            <person name="Sadow P.W."/>
            <person name="Hanna M.C."/>
            <person name="Cotton M.D."/>
            <person name="Roberts K.M."/>
            <person name="Hurst M.A."/>
            <person name="Kaine B.P."/>
            <person name="Borodovsky M."/>
            <person name="Klenk H.-P."/>
            <person name="Fraser C.M."/>
            <person name="Smith H.O."/>
            <person name="Woese C.R."/>
            <person name="Venter J.C."/>
        </authorList>
    </citation>
    <scope>NUCLEOTIDE SEQUENCE [LARGE SCALE GENOMIC DNA]</scope>
    <source>
        <strain>ATCC 43067 / DSM 2661 / JAL-1 / JCM 10045 / NBRC 100440</strain>
    </source>
</reference>
<reference key="2">
    <citation type="journal article" date="2005" name="J. Biol. Chem.">
        <title>MJ0917 in archaeon Methanococcus jannaschii is a novel NADP phosphatase/NAD kinase.</title>
        <authorList>
            <person name="Kawai S."/>
            <person name="Fukuda C."/>
            <person name="Mukai T."/>
            <person name="Murata K."/>
        </authorList>
    </citation>
    <scope>PROTEIN SEQUENCE OF 1-8</scope>
    <scope>FUNCTION</scope>
    <scope>CATALYTIC ACTIVITY</scope>
    <scope>BIOPHYSICOCHEMICAL PROPERTIES</scope>
    <scope>COFACTOR</scope>
    <scope>SUBSTRATE SPECIFICITY</scope>
    <scope>ACTIVITY REGULATION</scope>
    <scope>SUBUNIT</scope>
</reference>
<feature type="chain" id="PRO_0000120700" description="Bifunctional NADP phosphatase/NAD kinase">
    <location>
        <begin position="1"/>
        <end position="574"/>
    </location>
</feature>
<feature type="region of interest" description="NADP phosphatase" evidence="6">
    <location>
        <begin position="1"/>
        <end position="297"/>
    </location>
</feature>
<feature type="region of interest" description="NAD kinase" evidence="6">
    <location>
        <begin position="302"/>
        <end position="574"/>
    </location>
</feature>
<feature type="active site" description="Proton acceptor" evidence="2">
    <location>
        <position position="362"/>
    </location>
</feature>
<feature type="binding site" evidence="1">
    <location>
        <position position="69"/>
    </location>
    <ligand>
        <name>Mg(2+)</name>
        <dbReference type="ChEBI" id="CHEBI:18420"/>
        <label>1</label>
    </ligand>
</feature>
<feature type="binding site" evidence="1">
    <location>
        <position position="87"/>
    </location>
    <ligand>
        <name>Mg(2+)</name>
        <dbReference type="ChEBI" id="CHEBI:18420"/>
        <label>1</label>
    </ligand>
</feature>
<feature type="binding site" evidence="1">
    <location>
        <position position="87"/>
    </location>
    <ligand>
        <name>Mg(2+)</name>
        <dbReference type="ChEBI" id="CHEBI:18420"/>
        <label>2</label>
    </ligand>
</feature>
<feature type="binding site" evidence="1">
    <location>
        <position position="89"/>
    </location>
    <ligand>
        <name>Mg(2+)</name>
        <dbReference type="ChEBI" id="CHEBI:18420"/>
        <label>1</label>
    </ligand>
</feature>
<feature type="binding site" evidence="1">
    <location>
        <position position="90"/>
    </location>
    <ligand>
        <name>Mg(2+)</name>
        <dbReference type="ChEBI" id="CHEBI:18420"/>
        <label>2</label>
    </ligand>
</feature>
<feature type="binding site" evidence="1">
    <location>
        <position position="243"/>
    </location>
    <ligand>
        <name>Mg(2+)</name>
        <dbReference type="ChEBI" id="CHEBI:18420"/>
        <label>2</label>
    </ligand>
</feature>
<feature type="binding site" evidence="2">
    <location>
        <begin position="362"/>
        <end position="363"/>
    </location>
    <ligand>
        <name>NAD(+)</name>
        <dbReference type="ChEBI" id="CHEBI:57540"/>
    </ligand>
</feature>
<feature type="binding site" evidence="2">
    <location>
        <position position="367"/>
    </location>
    <ligand>
        <name>NAD(+)</name>
        <dbReference type="ChEBI" id="CHEBI:57540"/>
    </ligand>
</feature>
<feature type="binding site" evidence="2">
    <location>
        <begin position="436"/>
        <end position="437"/>
    </location>
    <ligand>
        <name>NAD(+)</name>
        <dbReference type="ChEBI" id="CHEBI:57540"/>
    </ligand>
</feature>
<feature type="binding site" evidence="2">
    <location>
        <position position="447"/>
    </location>
    <ligand>
        <name>NAD(+)</name>
        <dbReference type="ChEBI" id="CHEBI:57540"/>
    </ligand>
</feature>
<feature type="binding site" evidence="2">
    <location>
        <position position="464"/>
    </location>
    <ligand>
        <name>NAD(+)</name>
        <dbReference type="ChEBI" id="CHEBI:57540"/>
    </ligand>
</feature>
<feature type="binding site" evidence="2">
    <location>
        <position position="466"/>
    </location>
    <ligand>
        <name>NAD(+)</name>
        <dbReference type="ChEBI" id="CHEBI:57540"/>
    </ligand>
</feature>
<feature type="binding site" evidence="2">
    <location>
        <begin position="477"/>
        <end position="482"/>
    </location>
    <ligand>
        <name>NAD(+)</name>
        <dbReference type="ChEBI" id="CHEBI:57540"/>
    </ligand>
</feature>
<protein>
    <recommendedName>
        <fullName evidence="5">Bifunctional NADP phosphatase/NAD kinase</fullName>
    </recommendedName>
    <domain>
        <recommendedName>
            <fullName evidence="2 4">NAD kinase</fullName>
            <ecNumber evidence="2 3">2.7.1.23</ecNumber>
        </recommendedName>
        <alternativeName>
            <fullName evidence="2">ATP-dependent NAD kinase</fullName>
        </alternativeName>
        <alternativeName>
            <fullName>Poly(P)-dependent NAD kinase</fullName>
            <shortName>PPNK</shortName>
        </alternativeName>
    </domain>
    <domain>
        <recommendedName>
            <fullName evidence="4">NADP phosphatase</fullName>
            <shortName evidence="4">NADPase</shortName>
            <shortName evidence="4">pNPPase</shortName>
            <ecNumber evidence="3">3.1.3.-</ecNumber>
        </recommendedName>
    </domain>
</protein>
<gene>
    <name type="ordered locus">MJ0917</name>
</gene>
<evidence type="ECO:0000250" key="1">
    <source>
        <dbReference type="UniProtKB" id="Q57573"/>
    </source>
</evidence>
<evidence type="ECO:0000255" key="2">
    <source>
        <dbReference type="HAMAP-Rule" id="MF_00361"/>
    </source>
</evidence>
<evidence type="ECO:0000269" key="3">
    <source>
    </source>
</evidence>
<evidence type="ECO:0000303" key="4">
    <source>
    </source>
</evidence>
<evidence type="ECO:0000305" key="5"/>
<evidence type="ECO:0000305" key="6">
    <source>
    </source>
</evidence>
<accession>Q58327</accession>
<keyword id="KW-0067">ATP-binding</keyword>
<keyword id="KW-0963">Cytoplasm</keyword>
<keyword id="KW-0903">Direct protein sequencing</keyword>
<keyword id="KW-0378">Hydrolase</keyword>
<keyword id="KW-0418">Kinase</keyword>
<keyword id="KW-0460">Magnesium</keyword>
<keyword id="KW-0479">Metal-binding</keyword>
<keyword id="KW-0511">Multifunctional enzyme</keyword>
<keyword id="KW-0520">NAD</keyword>
<keyword id="KW-0521">NADP</keyword>
<keyword id="KW-0547">Nucleotide-binding</keyword>
<keyword id="KW-1185">Reference proteome</keyword>
<keyword id="KW-0808">Transferase</keyword>